<dbReference type="EC" id="2.3.1.191" evidence="1"/>
<dbReference type="EMBL" id="CP000057">
    <property type="protein sequence ID" value="AAX87953.1"/>
    <property type="molecule type" value="Genomic_DNA"/>
</dbReference>
<dbReference type="RefSeq" id="WP_011272285.1">
    <property type="nucleotide sequence ID" value="NC_007146.2"/>
</dbReference>
<dbReference type="SMR" id="Q4QLZ4"/>
<dbReference type="KEGG" id="hit:NTHI1082"/>
<dbReference type="HOGENOM" id="CLU_049865_0_1_6"/>
<dbReference type="UniPathway" id="UPA00973"/>
<dbReference type="Proteomes" id="UP000002525">
    <property type="component" value="Chromosome"/>
</dbReference>
<dbReference type="GO" id="GO:0016020">
    <property type="term" value="C:membrane"/>
    <property type="evidence" value="ECO:0007669"/>
    <property type="project" value="GOC"/>
</dbReference>
<dbReference type="GO" id="GO:0016410">
    <property type="term" value="F:N-acyltransferase activity"/>
    <property type="evidence" value="ECO:0007669"/>
    <property type="project" value="InterPro"/>
</dbReference>
<dbReference type="GO" id="GO:0009245">
    <property type="term" value="P:lipid A biosynthetic process"/>
    <property type="evidence" value="ECO:0007669"/>
    <property type="project" value="UniProtKB-UniRule"/>
</dbReference>
<dbReference type="CDD" id="cd03352">
    <property type="entry name" value="LbH_LpxD"/>
    <property type="match status" value="1"/>
</dbReference>
<dbReference type="FunFam" id="2.160.10.10:FF:000005">
    <property type="entry name" value="UDP-3-O-(3-hydroxymyristoyl)glucosamine N-acyltransferase"/>
    <property type="match status" value="1"/>
</dbReference>
<dbReference type="Gene3D" id="1.20.5.170">
    <property type="match status" value="1"/>
</dbReference>
<dbReference type="Gene3D" id="2.160.10.10">
    <property type="entry name" value="Hexapeptide repeat proteins"/>
    <property type="match status" value="1"/>
</dbReference>
<dbReference type="Gene3D" id="3.40.1390.10">
    <property type="entry name" value="MurE/MurF, N-terminal domain"/>
    <property type="match status" value="1"/>
</dbReference>
<dbReference type="HAMAP" id="MF_00523">
    <property type="entry name" value="LpxD"/>
    <property type="match status" value="1"/>
</dbReference>
<dbReference type="InterPro" id="IPR001451">
    <property type="entry name" value="Hexapep"/>
</dbReference>
<dbReference type="InterPro" id="IPR018357">
    <property type="entry name" value="Hexapep_transf_CS"/>
</dbReference>
<dbReference type="InterPro" id="IPR007691">
    <property type="entry name" value="LpxD"/>
</dbReference>
<dbReference type="InterPro" id="IPR011004">
    <property type="entry name" value="Trimer_LpxA-like_sf"/>
</dbReference>
<dbReference type="InterPro" id="IPR020573">
    <property type="entry name" value="UDP_GlcNAc_AcTrfase_non-rep"/>
</dbReference>
<dbReference type="NCBIfam" id="TIGR01853">
    <property type="entry name" value="lipid_A_lpxD"/>
    <property type="match status" value="1"/>
</dbReference>
<dbReference type="NCBIfam" id="NF002060">
    <property type="entry name" value="PRK00892.1"/>
    <property type="match status" value="1"/>
</dbReference>
<dbReference type="PANTHER" id="PTHR43378">
    <property type="entry name" value="UDP-3-O-ACYLGLUCOSAMINE N-ACYLTRANSFERASE"/>
    <property type="match status" value="1"/>
</dbReference>
<dbReference type="PANTHER" id="PTHR43378:SF2">
    <property type="entry name" value="UDP-3-O-ACYLGLUCOSAMINE N-ACYLTRANSFERASE 1, MITOCHONDRIAL-RELATED"/>
    <property type="match status" value="1"/>
</dbReference>
<dbReference type="Pfam" id="PF00132">
    <property type="entry name" value="Hexapep"/>
    <property type="match status" value="2"/>
</dbReference>
<dbReference type="Pfam" id="PF14602">
    <property type="entry name" value="Hexapep_2"/>
    <property type="match status" value="1"/>
</dbReference>
<dbReference type="Pfam" id="PF04613">
    <property type="entry name" value="LpxD"/>
    <property type="match status" value="1"/>
</dbReference>
<dbReference type="SUPFAM" id="SSF51161">
    <property type="entry name" value="Trimeric LpxA-like enzymes"/>
    <property type="match status" value="1"/>
</dbReference>
<dbReference type="PROSITE" id="PS00101">
    <property type="entry name" value="HEXAPEP_TRANSFERASES"/>
    <property type="match status" value="3"/>
</dbReference>
<keyword id="KW-0012">Acyltransferase</keyword>
<keyword id="KW-0441">Lipid A biosynthesis</keyword>
<keyword id="KW-0444">Lipid biosynthesis</keyword>
<keyword id="KW-0443">Lipid metabolism</keyword>
<keyword id="KW-0677">Repeat</keyword>
<keyword id="KW-0808">Transferase</keyword>
<feature type="chain" id="PRO_0000264380" description="UDP-3-O-acylglucosamine N-acyltransferase">
    <location>
        <begin position="1"/>
        <end position="341"/>
    </location>
</feature>
<feature type="active site" description="Proton acceptor" evidence="1">
    <location>
        <position position="242"/>
    </location>
</feature>
<protein>
    <recommendedName>
        <fullName evidence="1">UDP-3-O-acylglucosamine N-acyltransferase</fullName>
        <ecNumber evidence="1">2.3.1.191</ecNumber>
    </recommendedName>
</protein>
<reference key="1">
    <citation type="journal article" date="2005" name="J. Bacteriol.">
        <title>Genomic sequence of an otitis media isolate of nontypeable Haemophilus influenzae: comparative study with H. influenzae serotype d, strain KW20.</title>
        <authorList>
            <person name="Harrison A."/>
            <person name="Dyer D.W."/>
            <person name="Gillaspy A."/>
            <person name="Ray W.C."/>
            <person name="Mungur R."/>
            <person name="Carson M.B."/>
            <person name="Zhong H."/>
            <person name="Gipson J."/>
            <person name="Gipson M."/>
            <person name="Johnson L.S."/>
            <person name="Lewis L."/>
            <person name="Bakaletz L.O."/>
            <person name="Munson R.S. Jr."/>
        </authorList>
    </citation>
    <scope>NUCLEOTIDE SEQUENCE [LARGE SCALE GENOMIC DNA]</scope>
    <source>
        <strain>86-028NP</strain>
    </source>
</reference>
<accession>Q4QLZ4</accession>
<organism>
    <name type="scientific">Haemophilus influenzae (strain 86-028NP)</name>
    <dbReference type="NCBI Taxonomy" id="281310"/>
    <lineage>
        <taxon>Bacteria</taxon>
        <taxon>Pseudomonadati</taxon>
        <taxon>Pseudomonadota</taxon>
        <taxon>Gammaproteobacteria</taxon>
        <taxon>Pasteurellales</taxon>
        <taxon>Pasteurellaceae</taxon>
        <taxon>Haemophilus</taxon>
    </lineage>
</organism>
<proteinExistence type="inferred from homology"/>
<name>LPXD_HAEI8</name>
<comment type="function">
    <text evidence="1">Catalyzes the N-acylation of UDP-3-O-acylglucosamine using 3-hydroxyacyl-ACP as the acyl donor. Is involved in the biosynthesis of lipid A, a phosphorylated glycolipid that anchors the lipopolysaccharide to the outer membrane of the cell.</text>
</comment>
<comment type="catalytic activity">
    <reaction evidence="1">
        <text>a UDP-3-O-[(3R)-3-hydroxyacyl]-alpha-D-glucosamine + a (3R)-hydroxyacyl-[ACP] = a UDP-2-N,3-O-bis[(3R)-3-hydroxyacyl]-alpha-D-glucosamine + holo-[ACP] + H(+)</text>
        <dbReference type="Rhea" id="RHEA:53836"/>
        <dbReference type="Rhea" id="RHEA-COMP:9685"/>
        <dbReference type="Rhea" id="RHEA-COMP:9945"/>
        <dbReference type="ChEBI" id="CHEBI:15378"/>
        <dbReference type="ChEBI" id="CHEBI:64479"/>
        <dbReference type="ChEBI" id="CHEBI:78827"/>
        <dbReference type="ChEBI" id="CHEBI:137740"/>
        <dbReference type="ChEBI" id="CHEBI:137748"/>
        <dbReference type="EC" id="2.3.1.191"/>
    </reaction>
</comment>
<comment type="pathway">
    <text evidence="1">Bacterial outer membrane biogenesis; LPS lipid A biosynthesis.</text>
</comment>
<comment type="subunit">
    <text evidence="1">Homotrimer.</text>
</comment>
<comment type="similarity">
    <text evidence="1">Belongs to the transferase hexapeptide repeat family. LpxD subfamily.</text>
</comment>
<sequence length="341" mass="35964">MQKSYSLQELATQIGATVRGNADVVVENIAPLDKAQSNQLTFISNVKFRALLKDSKAGILVVSEEDVEHCSPESNLLIVKDPYVAYAILAQYMDSTPKAAQGIAKSAVIFDGVLLGENVSIGANAVIEEGVVLGDNVIIGANCFVGKNTKIGSGTQLWANVTVYHNVEIGANCLIQSGTVIGSDGFGYANDRGRWIKIPQVGQVIIGNNVEIGANTCIDRGALDATIIEDNVIIDNLCQIAHNVHIGTGTAVAGGVIMAGSLTVGRYCLIGGASVINGHMEICDKVTITGMGMVMRPITEPGVYSSGIPLQTNKEWRKTAALTLGIDGINKRLKALEKKIS</sequence>
<gene>
    <name evidence="1" type="primary">lpxD</name>
    <name type="ordered locus">NTHI1082</name>
</gene>
<evidence type="ECO:0000255" key="1">
    <source>
        <dbReference type="HAMAP-Rule" id="MF_00523"/>
    </source>
</evidence>